<gene>
    <name evidence="1" type="primary">panD</name>
    <name type="ordered locus">A1S_0825</name>
</gene>
<organism>
    <name type="scientific">Acinetobacter baumannii (strain ATCC 17978 / DSM 105126 / CIP 53.77 / LMG 1025 / NCDC KC755 / 5377)</name>
    <dbReference type="NCBI Taxonomy" id="400667"/>
    <lineage>
        <taxon>Bacteria</taxon>
        <taxon>Pseudomonadati</taxon>
        <taxon>Pseudomonadota</taxon>
        <taxon>Gammaproteobacteria</taxon>
        <taxon>Moraxellales</taxon>
        <taxon>Moraxellaceae</taxon>
        <taxon>Acinetobacter</taxon>
        <taxon>Acinetobacter calcoaceticus/baumannii complex</taxon>
    </lineage>
</organism>
<name>PAND_ACIBT</name>
<feature type="chain" id="PRO_0000306919" description="Aspartate 1-decarboxylase beta chain" evidence="1">
    <location>
        <begin position="1"/>
        <end position="24"/>
    </location>
</feature>
<feature type="chain" id="PRO_0000306920" description="Aspartate 1-decarboxylase alpha chain" evidence="1">
    <location>
        <begin position="25"/>
        <end position="126"/>
    </location>
</feature>
<feature type="active site" description="Schiff-base intermediate with substrate; via pyruvic acid" evidence="1">
    <location>
        <position position="25"/>
    </location>
</feature>
<feature type="active site" description="Proton donor" evidence="1">
    <location>
        <position position="58"/>
    </location>
</feature>
<feature type="binding site" evidence="1">
    <location>
        <position position="57"/>
    </location>
    <ligand>
        <name>substrate</name>
    </ligand>
</feature>
<feature type="binding site" evidence="1">
    <location>
        <begin position="73"/>
        <end position="75"/>
    </location>
    <ligand>
        <name>substrate</name>
    </ligand>
</feature>
<feature type="modified residue" description="Pyruvic acid (Ser)" evidence="1">
    <location>
        <position position="25"/>
    </location>
</feature>
<evidence type="ECO:0000255" key="1">
    <source>
        <dbReference type="HAMAP-Rule" id="MF_00446"/>
    </source>
</evidence>
<protein>
    <recommendedName>
        <fullName evidence="1">Aspartate 1-decarboxylase</fullName>
        <ecNumber evidence="1">4.1.1.11</ecNumber>
    </recommendedName>
    <alternativeName>
        <fullName evidence="1">Aspartate alpha-decarboxylase</fullName>
    </alternativeName>
    <component>
        <recommendedName>
            <fullName evidence="1">Aspartate 1-decarboxylase beta chain</fullName>
        </recommendedName>
    </component>
    <component>
        <recommendedName>
            <fullName evidence="1">Aspartate 1-decarboxylase alpha chain</fullName>
        </recommendedName>
    </component>
</protein>
<accession>A3M2W9</accession>
<sequence length="126" mass="13713">MLSRLLKCKIHRAVVTHAELHYEGSCAIDGVLMDLAGIREYEEIHVWNVTNGKRFTTYAIRGEDNSGIISVNGGAAHQADVGDLVIIATFGDFTEAEANAHKPRLVYANPDNTVNHTANCIPVQVA</sequence>
<reference key="1">
    <citation type="journal article" date="2007" name="Genes Dev.">
        <title>New insights into Acinetobacter baumannii pathogenesis revealed by high-density pyrosequencing and transposon mutagenesis.</title>
        <authorList>
            <person name="Smith M.G."/>
            <person name="Gianoulis T.A."/>
            <person name="Pukatzki S."/>
            <person name="Mekalanos J.J."/>
            <person name="Ornston L.N."/>
            <person name="Gerstein M."/>
            <person name="Snyder M."/>
        </authorList>
    </citation>
    <scope>NUCLEOTIDE SEQUENCE [LARGE SCALE GENOMIC DNA]</scope>
    <source>
        <strain>ATCC 17978 / DSM 105126 / CIP 53.77 / LMG 1025 / NCDC KC755 / 5377</strain>
    </source>
</reference>
<keyword id="KW-0068">Autocatalytic cleavage</keyword>
<keyword id="KW-0963">Cytoplasm</keyword>
<keyword id="KW-0210">Decarboxylase</keyword>
<keyword id="KW-0456">Lyase</keyword>
<keyword id="KW-0566">Pantothenate biosynthesis</keyword>
<keyword id="KW-0670">Pyruvate</keyword>
<keyword id="KW-0704">Schiff base</keyword>
<keyword id="KW-0865">Zymogen</keyword>
<dbReference type="EC" id="4.1.1.11" evidence="1"/>
<dbReference type="EMBL" id="CP000521">
    <property type="protein sequence ID" value="ABO11263.2"/>
    <property type="molecule type" value="Genomic_DNA"/>
</dbReference>
<dbReference type="RefSeq" id="WP_000952664.1">
    <property type="nucleotide sequence ID" value="NZ_CP053098.1"/>
</dbReference>
<dbReference type="SMR" id="A3M2W9"/>
<dbReference type="GeneID" id="92892757"/>
<dbReference type="KEGG" id="acb:A1S_0825"/>
<dbReference type="HOGENOM" id="CLU_115305_2_1_6"/>
<dbReference type="UniPathway" id="UPA00028">
    <property type="reaction ID" value="UER00002"/>
</dbReference>
<dbReference type="GO" id="GO:0005829">
    <property type="term" value="C:cytosol"/>
    <property type="evidence" value="ECO:0007669"/>
    <property type="project" value="TreeGrafter"/>
</dbReference>
<dbReference type="GO" id="GO:0004068">
    <property type="term" value="F:aspartate 1-decarboxylase activity"/>
    <property type="evidence" value="ECO:0007669"/>
    <property type="project" value="UniProtKB-UniRule"/>
</dbReference>
<dbReference type="GO" id="GO:0006523">
    <property type="term" value="P:alanine biosynthetic process"/>
    <property type="evidence" value="ECO:0007669"/>
    <property type="project" value="InterPro"/>
</dbReference>
<dbReference type="GO" id="GO:0015940">
    <property type="term" value="P:pantothenate biosynthetic process"/>
    <property type="evidence" value="ECO:0007669"/>
    <property type="project" value="UniProtKB-UniRule"/>
</dbReference>
<dbReference type="CDD" id="cd06919">
    <property type="entry name" value="Asp_decarbox"/>
    <property type="match status" value="1"/>
</dbReference>
<dbReference type="Gene3D" id="2.40.40.20">
    <property type="match status" value="1"/>
</dbReference>
<dbReference type="HAMAP" id="MF_00446">
    <property type="entry name" value="PanD"/>
    <property type="match status" value="1"/>
</dbReference>
<dbReference type="InterPro" id="IPR009010">
    <property type="entry name" value="Asp_de-COase-like_dom_sf"/>
</dbReference>
<dbReference type="InterPro" id="IPR003190">
    <property type="entry name" value="Asp_decarbox"/>
</dbReference>
<dbReference type="NCBIfam" id="TIGR00223">
    <property type="entry name" value="panD"/>
    <property type="match status" value="1"/>
</dbReference>
<dbReference type="PANTHER" id="PTHR21012">
    <property type="entry name" value="ASPARTATE 1-DECARBOXYLASE"/>
    <property type="match status" value="1"/>
</dbReference>
<dbReference type="PANTHER" id="PTHR21012:SF0">
    <property type="entry name" value="ASPARTATE 1-DECARBOXYLASE"/>
    <property type="match status" value="1"/>
</dbReference>
<dbReference type="Pfam" id="PF02261">
    <property type="entry name" value="Asp_decarbox"/>
    <property type="match status" value="1"/>
</dbReference>
<dbReference type="PIRSF" id="PIRSF006246">
    <property type="entry name" value="Asp_decarbox"/>
    <property type="match status" value="1"/>
</dbReference>
<dbReference type="SUPFAM" id="SSF50692">
    <property type="entry name" value="ADC-like"/>
    <property type="match status" value="1"/>
</dbReference>
<comment type="function">
    <text evidence="1">Catalyzes the pyruvoyl-dependent decarboxylation of aspartate to produce beta-alanine.</text>
</comment>
<comment type="catalytic activity">
    <reaction evidence="1">
        <text>L-aspartate + H(+) = beta-alanine + CO2</text>
        <dbReference type="Rhea" id="RHEA:19497"/>
        <dbReference type="ChEBI" id="CHEBI:15378"/>
        <dbReference type="ChEBI" id="CHEBI:16526"/>
        <dbReference type="ChEBI" id="CHEBI:29991"/>
        <dbReference type="ChEBI" id="CHEBI:57966"/>
        <dbReference type="EC" id="4.1.1.11"/>
    </reaction>
</comment>
<comment type="cofactor">
    <cofactor evidence="1">
        <name>pyruvate</name>
        <dbReference type="ChEBI" id="CHEBI:15361"/>
    </cofactor>
    <text evidence="1">Binds 1 pyruvoyl group covalently per subunit.</text>
</comment>
<comment type="pathway">
    <text evidence="1">Cofactor biosynthesis; (R)-pantothenate biosynthesis; beta-alanine from L-aspartate: step 1/1.</text>
</comment>
<comment type="subunit">
    <text evidence="1">Heterooctamer of four alpha and four beta subunits.</text>
</comment>
<comment type="subcellular location">
    <subcellularLocation>
        <location evidence="1">Cytoplasm</location>
    </subcellularLocation>
</comment>
<comment type="PTM">
    <text evidence="1">Is synthesized initially as an inactive proenzyme, which is activated by self-cleavage at a specific serine bond to produce a beta-subunit with a hydroxyl group at its C-terminus and an alpha-subunit with a pyruvoyl group at its N-terminus.</text>
</comment>
<comment type="similarity">
    <text evidence="1">Belongs to the PanD family.</text>
</comment>
<proteinExistence type="inferred from homology"/>